<accession>Q8DSZ5</accession>
<reference key="1">
    <citation type="journal article" date="2002" name="Proc. Natl. Acad. Sci. U.S.A.">
        <title>Genome sequence of Streptococcus mutans UA159, a cariogenic dental pathogen.</title>
        <authorList>
            <person name="Ajdic D.J."/>
            <person name="McShan W.M."/>
            <person name="McLaughlin R.E."/>
            <person name="Savic G."/>
            <person name="Chang J."/>
            <person name="Carson M.B."/>
            <person name="Primeaux C."/>
            <person name="Tian R."/>
            <person name="Kenton S."/>
            <person name="Jia H.G."/>
            <person name="Lin S.P."/>
            <person name="Qian Y."/>
            <person name="Li S."/>
            <person name="Zhu H."/>
            <person name="Najar F.Z."/>
            <person name="Lai H."/>
            <person name="White J."/>
            <person name="Roe B.A."/>
            <person name="Ferretti J.J."/>
        </authorList>
    </citation>
    <scope>NUCLEOTIDE SEQUENCE [LARGE SCALE GENOMIC DNA]</scope>
    <source>
        <strain>ATCC 700610 / UA159</strain>
    </source>
</reference>
<proteinExistence type="inferred from homology"/>
<evidence type="ECO:0000255" key="1">
    <source>
        <dbReference type="HAMAP-Rule" id="MF_00023"/>
    </source>
</evidence>
<evidence type="ECO:0000256" key="2">
    <source>
        <dbReference type="SAM" id="MobiDB-lite"/>
    </source>
</evidence>
<keyword id="KW-0963">Cytoplasm</keyword>
<keyword id="KW-1185">Reference proteome</keyword>
<keyword id="KW-0694">RNA-binding</keyword>
<gene>
    <name evidence="1" type="primary">smpB</name>
    <name type="ordered locus">SMU_1606</name>
</gene>
<comment type="function">
    <text evidence="1">Required for rescue of stalled ribosomes mediated by trans-translation. Binds to transfer-messenger RNA (tmRNA), required for stable association of tmRNA with ribosomes. tmRNA and SmpB together mimic tRNA shape, replacing the anticodon stem-loop with SmpB. tmRNA is encoded by the ssrA gene; the 2 termini fold to resemble tRNA(Ala) and it encodes a 'tag peptide', a short internal open reading frame. During trans-translation Ala-aminoacylated tmRNA acts like a tRNA, entering the A-site of stalled ribosomes, displacing the stalled mRNA. The ribosome then switches to translate the ORF on the tmRNA; the nascent peptide is terminated with the 'tag peptide' encoded by the tmRNA and targeted for degradation. The ribosome is freed to recommence translation, which seems to be the essential function of trans-translation.</text>
</comment>
<comment type="subcellular location">
    <subcellularLocation>
        <location evidence="1">Cytoplasm</location>
    </subcellularLocation>
    <text evidence="1">The tmRNA-SmpB complex associates with stalled 70S ribosomes.</text>
</comment>
<comment type="similarity">
    <text evidence="1">Belongs to the SmpB family.</text>
</comment>
<name>SSRP_STRMU</name>
<organism>
    <name type="scientific">Streptococcus mutans serotype c (strain ATCC 700610 / UA159)</name>
    <dbReference type="NCBI Taxonomy" id="210007"/>
    <lineage>
        <taxon>Bacteria</taxon>
        <taxon>Bacillati</taxon>
        <taxon>Bacillota</taxon>
        <taxon>Bacilli</taxon>
        <taxon>Lactobacillales</taxon>
        <taxon>Streptococcaceae</taxon>
        <taxon>Streptococcus</taxon>
    </lineage>
</organism>
<feature type="chain" id="PRO_0000103040" description="SsrA-binding protein">
    <location>
        <begin position="1"/>
        <end position="155"/>
    </location>
</feature>
<feature type="region of interest" description="Disordered" evidence="2">
    <location>
        <begin position="132"/>
        <end position="155"/>
    </location>
</feature>
<feature type="compositionally biased region" description="Basic and acidic residues" evidence="2">
    <location>
        <begin position="132"/>
        <end position="147"/>
    </location>
</feature>
<sequence length="155" mass="17860">MVKAQGNVVAQNKKARHDYEILETYEAGIVLTGTEIKSVRAARITLKDGFAQVKNGEVWLNNVHITPYEQGNIWNQDPDRTRKLLLKKREIAKLDNELKGTGMTLVPLKVYLKNGFAKVLIGLAKGKHDYDKRESIKRREQDRDIKRQMKQFNGR</sequence>
<protein>
    <recommendedName>
        <fullName evidence="1">SsrA-binding protein</fullName>
    </recommendedName>
    <alternativeName>
        <fullName evidence="1">Small protein B</fullName>
    </alternativeName>
</protein>
<dbReference type="EMBL" id="AE014133">
    <property type="protein sequence ID" value="AAN59248.1"/>
    <property type="molecule type" value="Genomic_DNA"/>
</dbReference>
<dbReference type="RefSeq" id="NP_721942.1">
    <property type="nucleotide sequence ID" value="NC_004350.2"/>
</dbReference>
<dbReference type="RefSeq" id="WP_002262783.1">
    <property type="nucleotide sequence ID" value="NC_004350.2"/>
</dbReference>
<dbReference type="SMR" id="Q8DSZ5"/>
<dbReference type="STRING" id="210007.SMU_1606"/>
<dbReference type="KEGG" id="smu:SMU_1606"/>
<dbReference type="PATRIC" id="fig|210007.7.peg.1430"/>
<dbReference type="eggNOG" id="COG0691">
    <property type="taxonomic scope" value="Bacteria"/>
</dbReference>
<dbReference type="HOGENOM" id="CLU_108953_0_1_9"/>
<dbReference type="OrthoDB" id="9805462at2"/>
<dbReference type="PhylomeDB" id="Q8DSZ5"/>
<dbReference type="Proteomes" id="UP000002512">
    <property type="component" value="Chromosome"/>
</dbReference>
<dbReference type="GO" id="GO:0005829">
    <property type="term" value="C:cytosol"/>
    <property type="evidence" value="ECO:0007669"/>
    <property type="project" value="TreeGrafter"/>
</dbReference>
<dbReference type="GO" id="GO:0003723">
    <property type="term" value="F:RNA binding"/>
    <property type="evidence" value="ECO:0007669"/>
    <property type="project" value="UniProtKB-UniRule"/>
</dbReference>
<dbReference type="GO" id="GO:0070929">
    <property type="term" value="P:trans-translation"/>
    <property type="evidence" value="ECO:0007669"/>
    <property type="project" value="UniProtKB-UniRule"/>
</dbReference>
<dbReference type="CDD" id="cd09294">
    <property type="entry name" value="SmpB"/>
    <property type="match status" value="1"/>
</dbReference>
<dbReference type="Gene3D" id="2.40.280.10">
    <property type="match status" value="1"/>
</dbReference>
<dbReference type="HAMAP" id="MF_00023">
    <property type="entry name" value="SmpB"/>
    <property type="match status" value="1"/>
</dbReference>
<dbReference type="InterPro" id="IPR023620">
    <property type="entry name" value="SmpB"/>
</dbReference>
<dbReference type="InterPro" id="IPR000037">
    <property type="entry name" value="SsrA-bd_prot"/>
</dbReference>
<dbReference type="InterPro" id="IPR020081">
    <property type="entry name" value="SsrA-bd_prot_CS"/>
</dbReference>
<dbReference type="NCBIfam" id="NF003843">
    <property type="entry name" value="PRK05422.1"/>
    <property type="match status" value="1"/>
</dbReference>
<dbReference type="NCBIfam" id="TIGR00086">
    <property type="entry name" value="smpB"/>
    <property type="match status" value="1"/>
</dbReference>
<dbReference type="PANTHER" id="PTHR30308:SF2">
    <property type="entry name" value="SSRA-BINDING PROTEIN"/>
    <property type="match status" value="1"/>
</dbReference>
<dbReference type="PANTHER" id="PTHR30308">
    <property type="entry name" value="TMRNA-BINDING COMPONENT OF TRANS-TRANSLATION TAGGING COMPLEX"/>
    <property type="match status" value="1"/>
</dbReference>
<dbReference type="Pfam" id="PF01668">
    <property type="entry name" value="SmpB"/>
    <property type="match status" value="1"/>
</dbReference>
<dbReference type="SUPFAM" id="SSF74982">
    <property type="entry name" value="Small protein B (SmpB)"/>
    <property type="match status" value="1"/>
</dbReference>
<dbReference type="PROSITE" id="PS01317">
    <property type="entry name" value="SSRP"/>
    <property type="match status" value="1"/>
</dbReference>